<keyword id="KW-0004">4Fe-4S</keyword>
<keyword id="KW-0408">Iron</keyword>
<keyword id="KW-0411">Iron-sulfur</keyword>
<keyword id="KW-0456">Lyase</keyword>
<keyword id="KW-0479">Metal-binding</keyword>
<keyword id="KW-0949">S-adenosyl-L-methionine</keyword>
<keyword id="KW-0784">Thiamine biosynthesis</keyword>
<keyword id="KW-0862">Zinc</keyword>
<feature type="chain" id="PRO_1000004799" description="Phosphomethylpyrimidine synthase">
    <location>
        <begin position="1"/>
        <end position="641"/>
    </location>
</feature>
<feature type="region of interest" description="Disordered" evidence="2">
    <location>
        <begin position="1"/>
        <end position="21"/>
    </location>
</feature>
<feature type="compositionally biased region" description="Polar residues" evidence="2">
    <location>
        <begin position="1"/>
        <end position="13"/>
    </location>
</feature>
<feature type="binding site" evidence="1">
    <location>
        <position position="221"/>
    </location>
    <ligand>
        <name>substrate</name>
    </ligand>
</feature>
<feature type="binding site" evidence="1">
    <location>
        <position position="250"/>
    </location>
    <ligand>
        <name>substrate</name>
    </ligand>
</feature>
<feature type="binding site" evidence="1">
    <location>
        <position position="279"/>
    </location>
    <ligand>
        <name>substrate</name>
    </ligand>
</feature>
<feature type="binding site" evidence="1">
    <location>
        <position position="315"/>
    </location>
    <ligand>
        <name>substrate</name>
    </ligand>
</feature>
<feature type="binding site" evidence="1">
    <location>
        <begin position="335"/>
        <end position="337"/>
    </location>
    <ligand>
        <name>substrate</name>
    </ligand>
</feature>
<feature type="binding site" evidence="1">
    <location>
        <begin position="376"/>
        <end position="379"/>
    </location>
    <ligand>
        <name>substrate</name>
    </ligand>
</feature>
<feature type="binding site" evidence="1">
    <location>
        <position position="415"/>
    </location>
    <ligand>
        <name>substrate</name>
    </ligand>
</feature>
<feature type="binding site" evidence="1">
    <location>
        <position position="419"/>
    </location>
    <ligand>
        <name>Zn(2+)</name>
        <dbReference type="ChEBI" id="CHEBI:29105"/>
    </ligand>
</feature>
<feature type="binding site" evidence="1">
    <location>
        <position position="442"/>
    </location>
    <ligand>
        <name>substrate</name>
    </ligand>
</feature>
<feature type="binding site" evidence="1">
    <location>
        <position position="483"/>
    </location>
    <ligand>
        <name>Zn(2+)</name>
        <dbReference type="ChEBI" id="CHEBI:29105"/>
    </ligand>
</feature>
<feature type="binding site" evidence="1">
    <location>
        <position position="563"/>
    </location>
    <ligand>
        <name>[4Fe-4S] cluster</name>
        <dbReference type="ChEBI" id="CHEBI:49883"/>
        <note>4Fe-4S-S-AdoMet</note>
    </ligand>
</feature>
<feature type="binding site" evidence="1">
    <location>
        <position position="566"/>
    </location>
    <ligand>
        <name>[4Fe-4S] cluster</name>
        <dbReference type="ChEBI" id="CHEBI:49883"/>
        <note>4Fe-4S-S-AdoMet</note>
    </ligand>
</feature>
<feature type="binding site" evidence="1">
    <location>
        <position position="571"/>
    </location>
    <ligand>
        <name>[4Fe-4S] cluster</name>
        <dbReference type="ChEBI" id="CHEBI:49883"/>
        <note>4Fe-4S-S-AdoMet</note>
    </ligand>
</feature>
<sequence>MNIRSNPDTTRPAVTTGGLPSSKKIYATPAAAPDLRVPLREIILSEGAGEPNLPIYDTSGPYTDPSVTIDVNAGLSRARTQWVKERGGVEEYQGRDVKPEDNGNVGAAHAAKSFTAYHKPLRGIGDAPITQYEFARRGIITKEMIYVAERENLGRKQQLERAEAALADGESFGASVPAFITPEFVRDEIARGRAIIPANINHGELEPMIIGRNFLTKINANIGNSAVTSSVEEEVDKMVWAIRWGADTVMDLSTGRNIHTTREWILRNSPVPIGTVPIYQALEKCEGDPVKLTWELYKDTLIEQCEQGVDYFTIHAGVRLQYIHLTANRVTGIVSRGGSIMAKWCLAHHKESFLYTHFDEICDLMRKYDVSFSLGDGLRPGSIADANDRAQFAELETLGELTKIAWAKGCQVMIEGPGHVPMHKIKINMDKQLKECGEAPFYTLGPLTTDIAPGYDHITSGIGAAMIGWFGCAMLCYVTPKEHLGLPDRNDVKVGVITYKIAAHAADLAKGHPAAQLRDDAVSRARFDFRWQDQFNLGLDPDTAQAFHDETLPKDAHKVAHFCSMCGPKFCSMKITQDVRDYAAGLGDNEKAALYPAGSVGMSISGVIEDGMAQMSAKFRDMGEHLYLDAEKVKESNKALS</sequence>
<proteinExistence type="inferred from homology"/>
<reference key="1">
    <citation type="submission" date="2006-03" db="EMBL/GenBank/DDBJ databases">
        <title>Complete sequence of Rhodopseudomonas palustris BisB5.</title>
        <authorList>
            <consortium name="US DOE Joint Genome Institute"/>
            <person name="Copeland A."/>
            <person name="Lucas S."/>
            <person name="Lapidus A."/>
            <person name="Barry K."/>
            <person name="Detter J.C."/>
            <person name="Glavina del Rio T."/>
            <person name="Hammon N."/>
            <person name="Israni S."/>
            <person name="Dalin E."/>
            <person name="Tice H."/>
            <person name="Pitluck S."/>
            <person name="Chain P."/>
            <person name="Malfatti S."/>
            <person name="Shin M."/>
            <person name="Vergez L."/>
            <person name="Schmutz J."/>
            <person name="Larimer F."/>
            <person name="Land M."/>
            <person name="Hauser L."/>
            <person name="Pelletier D.A."/>
            <person name="Kyrpides N."/>
            <person name="Lykidis A."/>
            <person name="Oda Y."/>
            <person name="Harwood C.S."/>
            <person name="Richardson P."/>
        </authorList>
    </citation>
    <scope>NUCLEOTIDE SEQUENCE [LARGE SCALE GENOMIC DNA]</scope>
    <source>
        <strain>BisB5</strain>
    </source>
</reference>
<gene>
    <name evidence="1" type="primary">thiC</name>
    <name type="ordered locus">RPD_3432</name>
</gene>
<comment type="function">
    <text evidence="1">Catalyzes the synthesis of the hydroxymethylpyrimidine phosphate (HMP-P) moiety of thiamine from aminoimidazole ribotide (AIR) in a radical S-adenosyl-L-methionine (SAM)-dependent reaction.</text>
</comment>
<comment type="catalytic activity">
    <reaction evidence="1">
        <text>5-amino-1-(5-phospho-beta-D-ribosyl)imidazole + S-adenosyl-L-methionine = 4-amino-2-methyl-5-(phosphooxymethyl)pyrimidine + CO + 5'-deoxyadenosine + formate + L-methionine + 3 H(+)</text>
        <dbReference type="Rhea" id="RHEA:24840"/>
        <dbReference type="ChEBI" id="CHEBI:15378"/>
        <dbReference type="ChEBI" id="CHEBI:15740"/>
        <dbReference type="ChEBI" id="CHEBI:17245"/>
        <dbReference type="ChEBI" id="CHEBI:17319"/>
        <dbReference type="ChEBI" id="CHEBI:57844"/>
        <dbReference type="ChEBI" id="CHEBI:58354"/>
        <dbReference type="ChEBI" id="CHEBI:59789"/>
        <dbReference type="ChEBI" id="CHEBI:137981"/>
        <dbReference type="EC" id="4.1.99.17"/>
    </reaction>
</comment>
<comment type="cofactor">
    <cofactor evidence="1">
        <name>[4Fe-4S] cluster</name>
        <dbReference type="ChEBI" id="CHEBI:49883"/>
    </cofactor>
    <text evidence="1">Binds 1 [4Fe-4S] cluster per subunit. The cluster is coordinated with 3 cysteines and an exchangeable S-adenosyl-L-methionine.</text>
</comment>
<comment type="pathway">
    <text evidence="1">Cofactor biosynthesis; thiamine diphosphate biosynthesis.</text>
</comment>
<comment type="subunit">
    <text evidence="1">Homodimer.</text>
</comment>
<comment type="similarity">
    <text evidence="1">Belongs to the ThiC family.</text>
</comment>
<protein>
    <recommendedName>
        <fullName evidence="1">Phosphomethylpyrimidine synthase</fullName>
        <ecNumber evidence="1">4.1.99.17</ecNumber>
    </recommendedName>
    <alternativeName>
        <fullName evidence="1">Hydroxymethylpyrimidine phosphate synthase</fullName>
        <shortName evidence="1">HMP-P synthase</shortName>
        <shortName evidence="1">HMP-phosphate synthase</shortName>
        <shortName evidence="1">HMPP synthase</shortName>
    </alternativeName>
    <alternativeName>
        <fullName evidence="1">Thiamine biosynthesis protein ThiC</fullName>
    </alternativeName>
</protein>
<organism>
    <name type="scientific">Rhodopseudomonas palustris (strain BisB5)</name>
    <dbReference type="NCBI Taxonomy" id="316057"/>
    <lineage>
        <taxon>Bacteria</taxon>
        <taxon>Pseudomonadati</taxon>
        <taxon>Pseudomonadota</taxon>
        <taxon>Alphaproteobacteria</taxon>
        <taxon>Hyphomicrobiales</taxon>
        <taxon>Nitrobacteraceae</taxon>
        <taxon>Rhodopseudomonas</taxon>
    </lineage>
</organism>
<evidence type="ECO:0000255" key="1">
    <source>
        <dbReference type="HAMAP-Rule" id="MF_00089"/>
    </source>
</evidence>
<evidence type="ECO:0000256" key="2">
    <source>
        <dbReference type="SAM" id="MobiDB-lite"/>
    </source>
</evidence>
<dbReference type="EC" id="4.1.99.17" evidence="1"/>
<dbReference type="EMBL" id="CP000283">
    <property type="protein sequence ID" value="ABE40656.1"/>
    <property type="molecule type" value="Genomic_DNA"/>
</dbReference>
<dbReference type="SMR" id="Q133T3"/>
<dbReference type="STRING" id="316057.RPD_3432"/>
<dbReference type="KEGG" id="rpd:RPD_3432"/>
<dbReference type="eggNOG" id="COG0422">
    <property type="taxonomic scope" value="Bacteria"/>
</dbReference>
<dbReference type="HOGENOM" id="CLU_013181_2_1_5"/>
<dbReference type="BioCyc" id="RPAL316057:RPD_RS17260-MONOMER"/>
<dbReference type="UniPathway" id="UPA00060"/>
<dbReference type="Proteomes" id="UP000001818">
    <property type="component" value="Chromosome"/>
</dbReference>
<dbReference type="GO" id="GO:0005829">
    <property type="term" value="C:cytosol"/>
    <property type="evidence" value="ECO:0007669"/>
    <property type="project" value="TreeGrafter"/>
</dbReference>
<dbReference type="GO" id="GO:0051539">
    <property type="term" value="F:4 iron, 4 sulfur cluster binding"/>
    <property type="evidence" value="ECO:0007669"/>
    <property type="project" value="UniProtKB-KW"/>
</dbReference>
<dbReference type="GO" id="GO:0016830">
    <property type="term" value="F:carbon-carbon lyase activity"/>
    <property type="evidence" value="ECO:0007669"/>
    <property type="project" value="InterPro"/>
</dbReference>
<dbReference type="GO" id="GO:0008270">
    <property type="term" value="F:zinc ion binding"/>
    <property type="evidence" value="ECO:0007669"/>
    <property type="project" value="UniProtKB-UniRule"/>
</dbReference>
<dbReference type="GO" id="GO:0009228">
    <property type="term" value="P:thiamine biosynthetic process"/>
    <property type="evidence" value="ECO:0007669"/>
    <property type="project" value="UniProtKB-KW"/>
</dbReference>
<dbReference type="GO" id="GO:0009229">
    <property type="term" value="P:thiamine diphosphate biosynthetic process"/>
    <property type="evidence" value="ECO:0007669"/>
    <property type="project" value="UniProtKB-UniRule"/>
</dbReference>
<dbReference type="FunFam" id="3.20.20.540:FF:000001">
    <property type="entry name" value="Phosphomethylpyrimidine synthase"/>
    <property type="match status" value="1"/>
</dbReference>
<dbReference type="Gene3D" id="6.10.250.620">
    <property type="match status" value="1"/>
</dbReference>
<dbReference type="Gene3D" id="3.20.20.540">
    <property type="entry name" value="Radical SAM ThiC family, central domain"/>
    <property type="match status" value="1"/>
</dbReference>
<dbReference type="HAMAP" id="MF_00089">
    <property type="entry name" value="ThiC"/>
    <property type="match status" value="1"/>
</dbReference>
<dbReference type="InterPro" id="IPR037509">
    <property type="entry name" value="ThiC"/>
</dbReference>
<dbReference type="InterPro" id="IPR025747">
    <property type="entry name" value="ThiC-associated_dom"/>
</dbReference>
<dbReference type="InterPro" id="IPR038521">
    <property type="entry name" value="ThiC/Bza_core_dom"/>
</dbReference>
<dbReference type="InterPro" id="IPR002817">
    <property type="entry name" value="ThiC/BzaA/B"/>
</dbReference>
<dbReference type="NCBIfam" id="NF006763">
    <property type="entry name" value="PRK09284.1"/>
    <property type="match status" value="1"/>
</dbReference>
<dbReference type="NCBIfam" id="NF009895">
    <property type="entry name" value="PRK13352.1"/>
    <property type="match status" value="1"/>
</dbReference>
<dbReference type="NCBIfam" id="TIGR00190">
    <property type="entry name" value="thiC"/>
    <property type="match status" value="1"/>
</dbReference>
<dbReference type="PANTHER" id="PTHR30557:SF1">
    <property type="entry name" value="PHOSPHOMETHYLPYRIMIDINE SYNTHASE, CHLOROPLASTIC"/>
    <property type="match status" value="1"/>
</dbReference>
<dbReference type="PANTHER" id="PTHR30557">
    <property type="entry name" value="THIAMINE BIOSYNTHESIS PROTEIN THIC"/>
    <property type="match status" value="1"/>
</dbReference>
<dbReference type="Pfam" id="PF13667">
    <property type="entry name" value="ThiC-associated"/>
    <property type="match status" value="1"/>
</dbReference>
<dbReference type="Pfam" id="PF01964">
    <property type="entry name" value="ThiC_Rad_SAM"/>
    <property type="match status" value="1"/>
</dbReference>
<dbReference type="SFLD" id="SFLDF00407">
    <property type="entry name" value="phosphomethylpyrimidine_syntha"/>
    <property type="match status" value="1"/>
</dbReference>
<dbReference type="SFLD" id="SFLDG01114">
    <property type="entry name" value="phosphomethylpyrimidine_syntha"/>
    <property type="match status" value="1"/>
</dbReference>
<dbReference type="SFLD" id="SFLDS00113">
    <property type="entry name" value="Radical_SAM_Phosphomethylpyrim"/>
    <property type="match status" value="1"/>
</dbReference>
<name>THIC_RHOPS</name>
<accession>Q133T3</accession>